<reference key="1">
    <citation type="journal article" date="2003" name="Nature">
        <title>Unique physiological and pathogenic features of Leptospira interrogans revealed by whole-genome sequencing.</title>
        <authorList>
            <person name="Ren S.-X."/>
            <person name="Fu G."/>
            <person name="Jiang X.-G."/>
            <person name="Zeng R."/>
            <person name="Miao Y.-G."/>
            <person name="Xu H."/>
            <person name="Zhang Y.-X."/>
            <person name="Xiong H."/>
            <person name="Lu G."/>
            <person name="Lu L.-F."/>
            <person name="Jiang H.-Q."/>
            <person name="Jia J."/>
            <person name="Tu Y.-F."/>
            <person name="Jiang J.-X."/>
            <person name="Gu W.-Y."/>
            <person name="Zhang Y.-Q."/>
            <person name="Cai Z."/>
            <person name="Sheng H.-H."/>
            <person name="Yin H.-F."/>
            <person name="Zhang Y."/>
            <person name="Zhu G.-F."/>
            <person name="Wan M."/>
            <person name="Huang H.-L."/>
            <person name="Qian Z."/>
            <person name="Wang S.-Y."/>
            <person name="Ma W."/>
            <person name="Yao Z.-J."/>
            <person name="Shen Y."/>
            <person name="Qiang B.-Q."/>
            <person name="Xia Q.-C."/>
            <person name="Guo X.-K."/>
            <person name="Danchin A."/>
            <person name="Saint Girons I."/>
            <person name="Somerville R.L."/>
            <person name="Wen Y.-M."/>
            <person name="Shi M.-H."/>
            <person name="Chen Z."/>
            <person name="Xu J.-G."/>
            <person name="Zhao G.-P."/>
        </authorList>
    </citation>
    <scope>NUCLEOTIDE SEQUENCE [LARGE SCALE GENOMIC DNA]</scope>
    <source>
        <strain>56601</strain>
    </source>
</reference>
<comment type="function">
    <text evidence="1">Catalyzes oxygen-dependent 5-hydroxyuridine (ho5U) modification at position 34 in tRNAs.</text>
</comment>
<comment type="catalytic activity">
    <reaction evidence="1">
        <text>uridine(34) in tRNA + AH2 + O2 = 5-hydroxyuridine(34) in tRNA + A + H2O</text>
        <dbReference type="Rhea" id="RHEA:64224"/>
        <dbReference type="Rhea" id="RHEA-COMP:11727"/>
        <dbReference type="Rhea" id="RHEA-COMP:13381"/>
        <dbReference type="ChEBI" id="CHEBI:13193"/>
        <dbReference type="ChEBI" id="CHEBI:15377"/>
        <dbReference type="ChEBI" id="CHEBI:15379"/>
        <dbReference type="ChEBI" id="CHEBI:17499"/>
        <dbReference type="ChEBI" id="CHEBI:65315"/>
        <dbReference type="ChEBI" id="CHEBI:136877"/>
    </reaction>
</comment>
<comment type="similarity">
    <text evidence="1">Belongs to the TrhO family.</text>
</comment>
<accession>Q8CXS1</accession>
<keyword id="KW-0560">Oxidoreductase</keyword>
<keyword id="KW-1185">Reference proteome</keyword>
<keyword id="KW-0819">tRNA processing</keyword>
<feature type="chain" id="PRO_0000161482" description="tRNA uridine(34) hydroxylase">
    <location>
        <begin position="1"/>
        <end position="367"/>
    </location>
</feature>
<feature type="domain" description="Rhodanese" evidence="1">
    <location>
        <begin position="159"/>
        <end position="253"/>
    </location>
</feature>
<feature type="active site" description="Cysteine persulfide intermediate" evidence="1">
    <location>
        <position position="213"/>
    </location>
</feature>
<evidence type="ECO:0000255" key="1">
    <source>
        <dbReference type="HAMAP-Rule" id="MF_00469"/>
    </source>
</evidence>
<sequence>MANQGDFPKRTETKKRPLHNIYGKEILRKRLEEENFSRTTLSFYRYVILENVQELRDQLYAEWEILGVLGRIYIAREGINAQLSIPSHNLDFFRKNLDSRNQFKDMQFKIAVEDDSKSFLKLDLKIKKKIVADGLNDDAFDVTNVGKHLSAEEFNLHMEDENSIVVDVRNHYESEIGHFENAILPQSDTFREELRILLELLNGKENHKILMYCTGGIRCEKASAWLKHHGYKDVNQLHGGIISYAHEVSQKGLESKFKGKNFVFDGRLQEAIGNEVISSCHQCGAKCDRHVNCENPGCHVLFIQCPSCSEKFEGCCTLECQNVLHLPKEKQKEIRKGKLNENRFFSKSKIRPKISELYHGILFKSSK</sequence>
<protein>
    <recommendedName>
        <fullName evidence="1">tRNA uridine(34) hydroxylase</fullName>
        <ecNumber evidence="1">1.14.-.-</ecNumber>
    </recommendedName>
    <alternativeName>
        <fullName evidence="1">tRNA hydroxylation protein O</fullName>
    </alternativeName>
</protein>
<gene>
    <name evidence="1" type="primary">trhO</name>
    <name type="ordered locus">LA_3128</name>
</gene>
<organism>
    <name type="scientific">Leptospira interrogans serogroup Icterohaemorrhagiae serovar Lai (strain 56601)</name>
    <dbReference type="NCBI Taxonomy" id="189518"/>
    <lineage>
        <taxon>Bacteria</taxon>
        <taxon>Pseudomonadati</taxon>
        <taxon>Spirochaetota</taxon>
        <taxon>Spirochaetia</taxon>
        <taxon>Leptospirales</taxon>
        <taxon>Leptospiraceae</taxon>
        <taxon>Leptospira</taxon>
    </lineage>
</organism>
<name>TRHO_LEPIN</name>
<proteinExistence type="inferred from homology"/>
<dbReference type="EC" id="1.14.-.-" evidence="1"/>
<dbReference type="EMBL" id="AE010300">
    <property type="protein sequence ID" value="AAN50326.1"/>
    <property type="molecule type" value="Genomic_DNA"/>
</dbReference>
<dbReference type="RefSeq" id="NP_713308.1">
    <property type="nucleotide sequence ID" value="NC_004342.2"/>
</dbReference>
<dbReference type="RefSeq" id="WP_000013216.1">
    <property type="nucleotide sequence ID" value="NC_004342.2"/>
</dbReference>
<dbReference type="SMR" id="Q8CXS1"/>
<dbReference type="FunCoup" id="Q8CXS1">
    <property type="interactions" value="255"/>
</dbReference>
<dbReference type="STRING" id="189518.LA_3128"/>
<dbReference type="PaxDb" id="189518-LA_3128"/>
<dbReference type="EnsemblBacteria" id="AAN50326">
    <property type="protein sequence ID" value="AAN50326"/>
    <property type="gene ID" value="LA_3128"/>
</dbReference>
<dbReference type="KEGG" id="lil:LA_3128"/>
<dbReference type="PATRIC" id="fig|189518.3.peg.3106"/>
<dbReference type="HOGENOM" id="CLU_038878_1_1_12"/>
<dbReference type="InParanoid" id="Q8CXS1"/>
<dbReference type="OrthoDB" id="9778326at2"/>
<dbReference type="Proteomes" id="UP000001408">
    <property type="component" value="Chromosome I"/>
</dbReference>
<dbReference type="GO" id="GO:0016705">
    <property type="term" value="F:oxidoreductase activity, acting on paired donors, with incorporation or reduction of molecular oxygen"/>
    <property type="evidence" value="ECO:0007669"/>
    <property type="project" value="UniProtKB-UniRule"/>
</dbReference>
<dbReference type="GO" id="GO:0006400">
    <property type="term" value="P:tRNA modification"/>
    <property type="evidence" value="ECO:0007669"/>
    <property type="project" value="UniProtKB-UniRule"/>
</dbReference>
<dbReference type="CDD" id="cd01518">
    <property type="entry name" value="RHOD_YceA"/>
    <property type="match status" value="1"/>
</dbReference>
<dbReference type="Gene3D" id="3.30.70.100">
    <property type="match status" value="1"/>
</dbReference>
<dbReference type="Gene3D" id="3.40.250.10">
    <property type="entry name" value="Rhodanese-like domain"/>
    <property type="match status" value="1"/>
</dbReference>
<dbReference type="HAMAP" id="MF_00469">
    <property type="entry name" value="TrhO"/>
    <property type="match status" value="1"/>
</dbReference>
<dbReference type="InterPro" id="IPR001763">
    <property type="entry name" value="Rhodanese-like_dom"/>
</dbReference>
<dbReference type="InterPro" id="IPR036873">
    <property type="entry name" value="Rhodanese-like_dom_sf"/>
</dbReference>
<dbReference type="InterPro" id="IPR022111">
    <property type="entry name" value="Rhodanese_C"/>
</dbReference>
<dbReference type="InterPro" id="IPR020936">
    <property type="entry name" value="TrhO"/>
</dbReference>
<dbReference type="InterPro" id="IPR040503">
    <property type="entry name" value="TRHO_N"/>
</dbReference>
<dbReference type="NCBIfam" id="NF001133">
    <property type="entry name" value="PRK00142.1-1"/>
    <property type="match status" value="1"/>
</dbReference>
<dbReference type="NCBIfam" id="NF001135">
    <property type="entry name" value="PRK00142.1-3"/>
    <property type="match status" value="1"/>
</dbReference>
<dbReference type="PANTHER" id="PTHR43846:SF1">
    <property type="entry name" value="TRNA URIDINE(34) HYDROXYLASE"/>
    <property type="match status" value="1"/>
</dbReference>
<dbReference type="PANTHER" id="PTHR43846">
    <property type="entry name" value="UPF0176 PROTEIN YCEA"/>
    <property type="match status" value="1"/>
</dbReference>
<dbReference type="Pfam" id="PF00581">
    <property type="entry name" value="Rhodanese"/>
    <property type="match status" value="1"/>
</dbReference>
<dbReference type="Pfam" id="PF12368">
    <property type="entry name" value="Rhodanese_C"/>
    <property type="match status" value="1"/>
</dbReference>
<dbReference type="Pfam" id="PF17773">
    <property type="entry name" value="UPF0176_N"/>
    <property type="match status" value="1"/>
</dbReference>
<dbReference type="SMART" id="SM00450">
    <property type="entry name" value="RHOD"/>
    <property type="match status" value="1"/>
</dbReference>
<dbReference type="SUPFAM" id="SSF52821">
    <property type="entry name" value="Rhodanese/Cell cycle control phosphatase"/>
    <property type="match status" value="1"/>
</dbReference>
<dbReference type="PROSITE" id="PS50206">
    <property type="entry name" value="RHODANESE_3"/>
    <property type="match status" value="1"/>
</dbReference>